<reference key="1">
    <citation type="submission" date="2006-12" db="EMBL/GenBank/DDBJ databases">
        <authorList>
            <person name="Fouts D.E."/>
            <person name="Nelson K.E."/>
            <person name="Sebastian Y."/>
        </authorList>
    </citation>
    <scope>NUCLEOTIDE SEQUENCE [LARGE SCALE GENOMIC DNA]</scope>
    <source>
        <strain>81-176</strain>
    </source>
</reference>
<accession>A1VZR5</accession>
<protein>
    <recommendedName>
        <fullName evidence="1">Phosphoenolpyruvate carboxykinase (ATP)</fullName>
        <shortName evidence="1">PCK</shortName>
        <shortName evidence="1">PEP carboxykinase</shortName>
        <shortName evidence="1">PEPCK</shortName>
        <ecNumber evidence="1">4.1.1.49</ecNumber>
    </recommendedName>
</protein>
<sequence>MKKFDNLGLDNIKEIFHNLSYDELNAHEKANNEGLSTDNDTFCVDTGIFTGRSPKDKYFVKQDPSSKYIAWGKINQPITKELFDKLLTKAKQELSGKKIYVQDAFCGASLQSRKAVRFVTEIAWQAHFVKNMFIRPSQEELENFKADFIVYNACKCINEDYKQDGLNSEVFVIFNVEENIAVIGGTWYGGEMKKGIFSMMNYWLPLENKLSMHCSANVGEKDDVALFFGLSGTGKTTLSTDPKRRLIGDDEHGWDDEGVFNFEGGCYAKTINLDPEHEPEIYGAIKRNALLENVVLRADKSVDYADASKTENTRVSYPIEHIENHEPSLKAGHPKNIIFLSADAFGILPPVSKLSKEQAMYYFLSGYTAKVAGTERGITEPQATFSACFGEPFMPLHPTVYARLLGEKIEKHEVNVYLVNTGWSGGSYGVGKRMSIKATRACINAILDGSIAKCEFENFEVFNLAIPKALEGVESTLLNPINTWLDKNAYAETRDKLAHMFVQNFKRYEDVKEGIEFSKFGPKI</sequence>
<comment type="function">
    <text evidence="1">Involved in the gluconeogenesis. Catalyzes the conversion of oxaloacetate (OAA) to phosphoenolpyruvate (PEP) through direct phosphoryl transfer between the nucleoside triphosphate and OAA.</text>
</comment>
<comment type="catalytic activity">
    <reaction evidence="1">
        <text>oxaloacetate + ATP = phosphoenolpyruvate + ADP + CO2</text>
        <dbReference type="Rhea" id="RHEA:18617"/>
        <dbReference type="ChEBI" id="CHEBI:16452"/>
        <dbReference type="ChEBI" id="CHEBI:16526"/>
        <dbReference type="ChEBI" id="CHEBI:30616"/>
        <dbReference type="ChEBI" id="CHEBI:58702"/>
        <dbReference type="ChEBI" id="CHEBI:456216"/>
        <dbReference type="EC" id="4.1.1.49"/>
    </reaction>
</comment>
<comment type="cofactor">
    <cofactor evidence="1">
        <name>Mn(2+)</name>
        <dbReference type="ChEBI" id="CHEBI:29035"/>
    </cofactor>
    <text evidence="1">Binds 1 Mn(2+) ion per subunit.</text>
</comment>
<comment type="pathway">
    <text evidence="1">Carbohydrate biosynthesis; gluconeogenesis.</text>
</comment>
<comment type="subcellular location">
    <subcellularLocation>
        <location evidence="1">Cytoplasm</location>
    </subcellularLocation>
</comment>
<comment type="similarity">
    <text evidence="1">Belongs to the phosphoenolpyruvate carboxykinase (ATP) family.</text>
</comment>
<dbReference type="EC" id="4.1.1.49" evidence="1"/>
<dbReference type="EMBL" id="CP000538">
    <property type="protein sequence ID" value="EAQ71868.1"/>
    <property type="molecule type" value="Genomic_DNA"/>
</dbReference>
<dbReference type="RefSeq" id="WP_002856033.1">
    <property type="nucleotide sequence ID" value="NC_008787.1"/>
</dbReference>
<dbReference type="SMR" id="A1VZR5"/>
<dbReference type="KEGG" id="cjj:CJJ81176_0939"/>
<dbReference type="eggNOG" id="COG1866">
    <property type="taxonomic scope" value="Bacteria"/>
</dbReference>
<dbReference type="HOGENOM" id="CLU_018247_0_1_7"/>
<dbReference type="UniPathway" id="UPA00138"/>
<dbReference type="Proteomes" id="UP000000646">
    <property type="component" value="Chromosome"/>
</dbReference>
<dbReference type="GO" id="GO:0005829">
    <property type="term" value="C:cytosol"/>
    <property type="evidence" value="ECO:0007669"/>
    <property type="project" value="TreeGrafter"/>
</dbReference>
<dbReference type="GO" id="GO:0005524">
    <property type="term" value="F:ATP binding"/>
    <property type="evidence" value="ECO:0007669"/>
    <property type="project" value="UniProtKB-UniRule"/>
</dbReference>
<dbReference type="GO" id="GO:0046872">
    <property type="term" value="F:metal ion binding"/>
    <property type="evidence" value="ECO:0007669"/>
    <property type="project" value="UniProtKB-KW"/>
</dbReference>
<dbReference type="GO" id="GO:0004612">
    <property type="term" value="F:phosphoenolpyruvate carboxykinase (ATP) activity"/>
    <property type="evidence" value="ECO:0007669"/>
    <property type="project" value="UniProtKB-UniRule"/>
</dbReference>
<dbReference type="GO" id="GO:0006094">
    <property type="term" value="P:gluconeogenesis"/>
    <property type="evidence" value="ECO:0007669"/>
    <property type="project" value="UniProtKB-UniRule"/>
</dbReference>
<dbReference type="CDD" id="cd00484">
    <property type="entry name" value="PEPCK_ATP"/>
    <property type="match status" value="1"/>
</dbReference>
<dbReference type="FunFam" id="2.170.8.10:FF:000001">
    <property type="entry name" value="Phosphoenolpyruvate carboxykinase (ATP)"/>
    <property type="match status" value="1"/>
</dbReference>
<dbReference type="FunFam" id="3.40.449.10:FF:000001">
    <property type="entry name" value="Phosphoenolpyruvate carboxykinase (ATP)"/>
    <property type="match status" value="1"/>
</dbReference>
<dbReference type="Gene3D" id="3.90.228.20">
    <property type="match status" value="1"/>
</dbReference>
<dbReference type="Gene3D" id="3.40.449.10">
    <property type="entry name" value="Phosphoenolpyruvate Carboxykinase, domain 1"/>
    <property type="match status" value="1"/>
</dbReference>
<dbReference type="Gene3D" id="2.170.8.10">
    <property type="entry name" value="Phosphoenolpyruvate Carboxykinase, domain 2"/>
    <property type="match status" value="1"/>
</dbReference>
<dbReference type="HAMAP" id="MF_00453">
    <property type="entry name" value="PEPCK_ATP"/>
    <property type="match status" value="1"/>
</dbReference>
<dbReference type="InterPro" id="IPR001272">
    <property type="entry name" value="PEP_carboxykinase_ATP"/>
</dbReference>
<dbReference type="InterPro" id="IPR013035">
    <property type="entry name" value="PEP_carboxykinase_C"/>
</dbReference>
<dbReference type="InterPro" id="IPR008210">
    <property type="entry name" value="PEP_carboxykinase_N"/>
</dbReference>
<dbReference type="InterPro" id="IPR015994">
    <property type="entry name" value="PEPCK_ATP_CS"/>
</dbReference>
<dbReference type="NCBIfam" id="TIGR00224">
    <property type="entry name" value="pckA"/>
    <property type="match status" value="1"/>
</dbReference>
<dbReference type="NCBIfam" id="NF006819">
    <property type="entry name" value="PRK09344.1-1"/>
    <property type="match status" value="1"/>
</dbReference>
<dbReference type="NCBIfam" id="NF006820">
    <property type="entry name" value="PRK09344.1-2"/>
    <property type="match status" value="1"/>
</dbReference>
<dbReference type="NCBIfam" id="NF006821">
    <property type="entry name" value="PRK09344.1-3"/>
    <property type="match status" value="1"/>
</dbReference>
<dbReference type="PANTHER" id="PTHR30031:SF0">
    <property type="entry name" value="PHOSPHOENOLPYRUVATE CARBOXYKINASE (ATP)"/>
    <property type="match status" value="1"/>
</dbReference>
<dbReference type="PANTHER" id="PTHR30031">
    <property type="entry name" value="PHOSPHOENOLPYRUVATE CARBOXYKINASE ATP"/>
    <property type="match status" value="1"/>
</dbReference>
<dbReference type="Pfam" id="PF01293">
    <property type="entry name" value="PEPCK_ATP"/>
    <property type="match status" value="1"/>
</dbReference>
<dbReference type="PIRSF" id="PIRSF006294">
    <property type="entry name" value="PEP_crbxkin"/>
    <property type="match status" value="1"/>
</dbReference>
<dbReference type="SUPFAM" id="SSF68923">
    <property type="entry name" value="PEP carboxykinase N-terminal domain"/>
    <property type="match status" value="1"/>
</dbReference>
<dbReference type="SUPFAM" id="SSF53795">
    <property type="entry name" value="PEP carboxykinase-like"/>
    <property type="match status" value="1"/>
</dbReference>
<dbReference type="PROSITE" id="PS00532">
    <property type="entry name" value="PEPCK_ATP"/>
    <property type="match status" value="1"/>
</dbReference>
<proteinExistence type="inferred from homology"/>
<evidence type="ECO:0000255" key="1">
    <source>
        <dbReference type="HAMAP-Rule" id="MF_00453"/>
    </source>
</evidence>
<name>PCKA_CAMJJ</name>
<gene>
    <name evidence="1" type="primary">pckA</name>
    <name type="ordered locus">CJJ81176_0939</name>
</gene>
<feature type="chain" id="PRO_1000026320" description="Phosphoenolpyruvate carboxykinase (ATP)">
    <location>
        <begin position="1"/>
        <end position="524"/>
    </location>
</feature>
<feature type="binding site" evidence="1">
    <location>
        <position position="52"/>
    </location>
    <ligand>
        <name>substrate</name>
    </ligand>
</feature>
<feature type="binding site" evidence="1">
    <location>
        <position position="188"/>
    </location>
    <ligand>
        <name>substrate</name>
    </ligand>
</feature>
<feature type="binding site" evidence="1">
    <location>
        <position position="194"/>
    </location>
    <ligand>
        <name>ATP</name>
        <dbReference type="ChEBI" id="CHEBI:30616"/>
    </ligand>
</feature>
<feature type="binding site" evidence="1">
    <location>
        <position position="194"/>
    </location>
    <ligand>
        <name>Mn(2+)</name>
        <dbReference type="ChEBI" id="CHEBI:29035"/>
    </ligand>
</feature>
<feature type="binding site" evidence="1">
    <location>
        <position position="194"/>
    </location>
    <ligand>
        <name>substrate</name>
    </ligand>
</feature>
<feature type="binding site" evidence="1">
    <location>
        <position position="213"/>
    </location>
    <ligand>
        <name>ATP</name>
        <dbReference type="ChEBI" id="CHEBI:30616"/>
    </ligand>
</feature>
<feature type="binding site" evidence="1">
    <location>
        <position position="213"/>
    </location>
    <ligand>
        <name>Mn(2+)</name>
        <dbReference type="ChEBI" id="CHEBI:29035"/>
    </ligand>
</feature>
<feature type="binding site" evidence="1">
    <location>
        <begin position="229"/>
        <end position="237"/>
    </location>
    <ligand>
        <name>ATP</name>
        <dbReference type="ChEBI" id="CHEBI:30616"/>
    </ligand>
</feature>
<feature type="binding site" evidence="1">
    <location>
        <position position="250"/>
    </location>
    <ligand>
        <name>Mn(2+)</name>
        <dbReference type="ChEBI" id="CHEBI:29035"/>
    </ligand>
</feature>
<feature type="binding site" evidence="1">
    <location>
        <position position="278"/>
    </location>
    <ligand>
        <name>ATP</name>
        <dbReference type="ChEBI" id="CHEBI:30616"/>
    </ligand>
</feature>
<feature type="binding site" evidence="1">
    <location>
        <position position="314"/>
    </location>
    <ligand>
        <name>ATP</name>
        <dbReference type="ChEBI" id="CHEBI:30616"/>
    </ligand>
</feature>
<feature type="binding site" evidence="1">
    <location>
        <position position="314"/>
    </location>
    <ligand>
        <name>substrate</name>
    </ligand>
</feature>
<feature type="binding site" evidence="1">
    <location>
        <position position="439"/>
    </location>
    <ligand>
        <name>ATP</name>
        <dbReference type="ChEBI" id="CHEBI:30616"/>
    </ligand>
</feature>
<keyword id="KW-0067">ATP-binding</keyword>
<keyword id="KW-0963">Cytoplasm</keyword>
<keyword id="KW-0210">Decarboxylase</keyword>
<keyword id="KW-0312">Gluconeogenesis</keyword>
<keyword id="KW-0456">Lyase</keyword>
<keyword id="KW-0464">Manganese</keyword>
<keyword id="KW-0479">Metal-binding</keyword>
<keyword id="KW-0547">Nucleotide-binding</keyword>
<organism>
    <name type="scientific">Campylobacter jejuni subsp. jejuni serotype O:23/36 (strain 81-176)</name>
    <dbReference type="NCBI Taxonomy" id="354242"/>
    <lineage>
        <taxon>Bacteria</taxon>
        <taxon>Pseudomonadati</taxon>
        <taxon>Campylobacterota</taxon>
        <taxon>Epsilonproteobacteria</taxon>
        <taxon>Campylobacterales</taxon>
        <taxon>Campylobacteraceae</taxon>
        <taxon>Campylobacter</taxon>
    </lineage>
</organism>